<organism>
    <name type="scientific">Pseudomonas aeruginosa (strain ATCC 15692 / DSM 22644 / CIP 104116 / JCM 14847 / LMG 12228 / 1C / PRS 101 / PAO1)</name>
    <dbReference type="NCBI Taxonomy" id="208964"/>
    <lineage>
        <taxon>Bacteria</taxon>
        <taxon>Pseudomonadati</taxon>
        <taxon>Pseudomonadota</taxon>
        <taxon>Gammaproteobacteria</taxon>
        <taxon>Pseudomonadales</taxon>
        <taxon>Pseudomonadaceae</taxon>
        <taxon>Pseudomonas</taxon>
    </lineage>
</organism>
<evidence type="ECO:0000255" key="1">
    <source>
        <dbReference type="HAMAP-Rule" id="MF_01187"/>
    </source>
</evidence>
<reference key="1">
    <citation type="journal article" date="2000" name="Nature">
        <title>Complete genome sequence of Pseudomonas aeruginosa PAO1, an opportunistic pathogen.</title>
        <authorList>
            <person name="Stover C.K."/>
            <person name="Pham X.-Q.T."/>
            <person name="Erwin A.L."/>
            <person name="Mizoguchi S.D."/>
            <person name="Warrener P."/>
            <person name="Hickey M.J."/>
            <person name="Brinkman F.S.L."/>
            <person name="Hufnagle W.O."/>
            <person name="Kowalik D.J."/>
            <person name="Lagrou M."/>
            <person name="Garber R.L."/>
            <person name="Goltry L."/>
            <person name="Tolentino E."/>
            <person name="Westbrock-Wadman S."/>
            <person name="Yuan Y."/>
            <person name="Brody L.L."/>
            <person name="Coulter S.N."/>
            <person name="Folger K.R."/>
            <person name="Kas A."/>
            <person name="Larbig K."/>
            <person name="Lim R.M."/>
            <person name="Smith K.A."/>
            <person name="Spencer D.H."/>
            <person name="Wong G.K.-S."/>
            <person name="Wu Z."/>
            <person name="Paulsen I.T."/>
            <person name="Reizer J."/>
            <person name="Saier M.H. Jr."/>
            <person name="Hancock R.E.W."/>
            <person name="Lory S."/>
            <person name="Olson M.V."/>
        </authorList>
    </citation>
    <scope>NUCLEOTIDE SEQUENCE [LARGE SCALE GENOMIC DNA]</scope>
    <source>
        <strain>ATCC 15692 / DSM 22644 / CIP 104116 / JCM 14847 / LMG 12228 / 1C / PRS 101 / PAO1</strain>
    </source>
</reference>
<proteinExistence type="inferred from homology"/>
<sequence>MDPKLLDILACPLTKGPLVLSEDKTELISKQAGLAYPIRDGIPVMLESEARSLNVDERLDK</sequence>
<gene>
    <name type="ordered locus">PA2980</name>
</gene>
<comment type="similarity">
    <text evidence="1">Belongs to the UPF0434 family.</text>
</comment>
<protein>
    <recommendedName>
        <fullName evidence="1">UPF0434 protein PA2980</fullName>
    </recommendedName>
</protein>
<name>Y2980_PSEAE</name>
<accession>Q9HZM4</accession>
<dbReference type="EMBL" id="AE004091">
    <property type="protein sequence ID" value="AAG06368.1"/>
    <property type="molecule type" value="Genomic_DNA"/>
</dbReference>
<dbReference type="PIR" id="D83274">
    <property type="entry name" value="D83274"/>
</dbReference>
<dbReference type="RefSeq" id="NP_251670.1">
    <property type="nucleotide sequence ID" value="NC_002516.2"/>
</dbReference>
<dbReference type="RefSeq" id="WP_003091157.1">
    <property type="nucleotide sequence ID" value="NZ_QZGE01000009.1"/>
</dbReference>
<dbReference type="SMR" id="Q9HZM4"/>
<dbReference type="FunCoup" id="Q9HZM4">
    <property type="interactions" value="205"/>
</dbReference>
<dbReference type="STRING" id="208964.PA2980"/>
<dbReference type="PaxDb" id="208964-PA2980"/>
<dbReference type="DNASU" id="880502"/>
<dbReference type="GeneID" id="880502"/>
<dbReference type="KEGG" id="pae:PA2980"/>
<dbReference type="PATRIC" id="fig|208964.12.peg.3127"/>
<dbReference type="PseudoCAP" id="PA2980"/>
<dbReference type="HOGENOM" id="CLU_155659_2_2_6"/>
<dbReference type="InParanoid" id="Q9HZM4"/>
<dbReference type="OrthoDB" id="9812205at2"/>
<dbReference type="PhylomeDB" id="Q9HZM4"/>
<dbReference type="BioCyc" id="PAER208964:G1FZ6-3032-MONOMER"/>
<dbReference type="Proteomes" id="UP000002438">
    <property type="component" value="Chromosome"/>
</dbReference>
<dbReference type="GO" id="GO:0005829">
    <property type="term" value="C:cytosol"/>
    <property type="evidence" value="ECO:0000318"/>
    <property type="project" value="GO_Central"/>
</dbReference>
<dbReference type="FunFam" id="2.20.25.10:FF:000002">
    <property type="entry name" value="UPF0434 protein YcaR"/>
    <property type="match status" value="1"/>
</dbReference>
<dbReference type="Gene3D" id="2.20.25.10">
    <property type="match status" value="1"/>
</dbReference>
<dbReference type="HAMAP" id="MF_01187">
    <property type="entry name" value="UPF0434"/>
    <property type="match status" value="1"/>
</dbReference>
<dbReference type="InterPro" id="IPR005651">
    <property type="entry name" value="Trm112-like"/>
</dbReference>
<dbReference type="PANTHER" id="PTHR33505:SF4">
    <property type="entry name" value="PROTEIN PREY, MITOCHONDRIAL"/>
    <property type="match status" value="1"/>
</dbReference>
<dbReference type="PANTHER" id="PTHR33505">
    <property type="entry name" value="ZGC:162634"/>
    <property type="match status" value="1"/>
</dbReference>
<dbReference type="Pfam" id="PF03966">
    <property type="entry name" value="Trm112p"/>
    <property type="match status" value="1"/>
</dbReference>
<dbReference type="SUPFAM" id="SSF158997">
    <property type="entry name" value="Trm112p-like"/>
    <property type="match status" value="1"/>
</dbReference>
<keyword id="KW-1185">Reference proteome</keyword>
<feature type="chain" id="PRO_0000291131" description="UPF0434 protein PA2980">
    <location>
        <begin position="1"/>
        <end position="61"/>
    </location>
</feature>